<dbReference type="EC" id="6.1.1.17" evidence="1"/>
<dbReference type="EMBL" id="CP000036">
    <property type="protein sequence ID" value="ABB66985.1"/>
    <property type="molecule type" value="Genomic_DNA"/>
</dbReference>
<dbReference type="RefSeq" id="WP_000695666.1">
    <property type="nucleotide sequence ID" value="NC_007613.1"/>
</dbReference>
<dbReference type="SMR" id="Q31Y73"/>
<dbReference type="KEGG" id="sbo:SBO_2426"/>
<dbReference type="HOGENOM" id="CLU_015768_6_0_6"/>
<dbReference type="Proteomes" id="UP000007067">
    <property type="component" value="Chromosome"/>
</dbReference>
<dbReference type="GO" id="GO:0005829">
    <property type="term" value="C:cytosol"/>
    <property type="evidence" value="ECO:0007669"/>
    <property type="project" value="TreeGrafter"/>
</dbReference>
<dbReference type="GO" id="GO:0005524">
    <property type="term" value="F:ATP binding"/>
    <property type="evidence" value="ECO:0007669"/>
    <property type="project" value="UniProtKB-UniRule"/>
</dbReference>
<dbReference type="GO" id="GO:0004818">
    <property type="term" value="F:glutamate-tRNA ligase activity"/>
    <property type="evidence" value="ECO:0007669"/>
    <property type="project" value="UniProtKB-UniRule"/>
</dbReference>
<dbReference type="GO" id="GO:0000049">
    <property type="term" value="F:tRNA binding"/>
    <property type="evidence" value="ECO:0007669"/>
    <property type="project" value="InterPro"/>
</dbReference>
<dbReference type="GO" id="GO:0008270">
    <property type="term" value="F:zinc ion binding"/>
    <property type="evidence" value="ECO:0007669"/>
    <property type="project" value="UniProtKB-UniRule"/>
</dbReference>
<dbReference type="GO" id="GO:0006424">
    <property type="term" value="P:glutamyl-tRNA aminoacylation"/>
    <property type="evidence" value="ECO:0007669"/>
    <property type="project" value="UniProtKB-UniRule"/>
</dbReference>
<dbReference type="CDD" id="cd00808">
    <property type="entry name" value="GluRS_core"/>
    <property type="match status" value="1"/>
</dbReference>
<dbReference type="FunFam" id="1.10.10.350:FF:000001">
    <property type="entry name" value="Glutamate--tRNA ligase"/>
    <property type="match status" value="1"/>
</dbReference>
<dbReference type="FunFam" id="3.40.50.620:FF:000007">
    <property type="entry name" value="Glutamate--tRNA ligase"/>
    <property type="match status" value="1"/>
</dbReference>
<dbReference type="Gene3D" id="1.10.10.350">
    <property type="match status" value="1"/>
</dbReference>
<dbReference type="Gene3D" id="3.40.50.620">
    <property type="entry name" value="HUPs"/>
    <property type="match status" value="1"/>
</dbReference>
<dbReference type="HAMAP" id="MF_00022">
    <property type="entry name" value="Glu_tRNA_synth_type1"/>
    <property type="match status" value="1"/>
</dbReference>
<dbReference type="InterPro" id="IPR045462">
    <property type="entry name" value="aa-tRNA-synth_I_cd-bd"/>
</dbReference>
<dbReference type="InterPro" id="IPR020751">
    <property type="entry name" value="aa-tRNA-synth_I_codon-bd_sub2"/>
</dbReference>
<dbReference type="InterPro" id="IPR001412">
    <property type="entry name" value="aa-tRNA-synth_I_CS"/>
</dbReference>
<dbReference type="InterPro" id="IPR008925">
    <property type="entry name" value="aa_tRNA-synth_I_cd-bd_sf"/>
</dbReference>
<dbReference type="InterPro" id="IPR004527">
    <property type="entry name" value="Glu-tRNA-ligase_bac/mito"/>
</dbReference>
<dbReference type="InterPro" id="IPR000924">
    <property type="entry name" value="Glu/Gln-tRNA-synth"/>
</dbReference>
<dbReference type="InterPro" id="IPR020058">
    <property type="entry name" value="Glu/Gln-tRNA-synth_Ib_cat-dom"/>
</dbReference>
<dbReference type="InterPro" id="IPR049940">
    <property type="entry name" value="GluQ/Sye"/>
</dbReference>
<dbReference type="InterPro" id="IPR033910">
    <property type="entry name" value="GluRS_core"/>
</dbReference>
<dbReference type="InterPro" id="IPR014729">
    <property type="entry name" value="Rossmann-like_a/b/a_fold"/>
</dbReference>
<dbReference type="NCBIfam" id="TIGR00464">
    <property type="entry name" value="gltX_bact"/>
    <property type="match status" value="1"/>
</dbReference>
<dbReference type="PANTHER" id="PTHR43311">
    <property type="entry name" value="GLUTAMATE--TRNA LIGASE"/>
    <property type="match status" value="1"/>
</dbReference>
<dbReference type="PANTHER" id="PTHR43311:SF2">
    <property type="entry name" value="GLUTAMATE--TRNA LIGASE, MITOCHONDRIAL-RELATED"/>
    <property type="match status" value="1"/>
</dbReference>
<dbReference type="Pfam" id="PF19269">
    <property type="entry name" value="Anticodon_2"/>
    <property type="match status" value="1"/>
</dbReference>
<dbReference type="Pfam" id="PF00749">
    <property type="entry name" value="tRNA-synt_1c"/>
    <property type="match status" value="1"/>
</dbReference>
<dbReference type="PRINTS" id="PR00987">
    <property type="entry name" value="TRNASYNTHGLU"/>
</dbReference>
<dbReference type="SUPFAM" id="SSF48163">
    <property type="entry name" value="An anticodon-binding domain of class I aminoacyl-tRNA synthetases"/>
    <property type="match status" value="1"/>
</dbReference>
<dbReference type="SUPFAM" id="SSF52374">
    <property type="entry name" value="Nucleotidylyl transferase"/>
    <property type="match status" value="1"/>
</dbReference>
<dbReference type="PROSITE" id="PS00178">
    <property type="entry name" value="AA_TRNA_LIGASE_I"/>
    <property type="match status" value="1"/>
</dbReference>
<keyword id="KW-0030">Aminoacyl-tRNA synthetase</keyword>
<keyword id="KW-0067">ATP-binding</keyword>
<keyword id="KW-0963">Cytoplasm</keyword>
<keyword id="KW-0436">Ligase</keyword>
<keyword id="KW-0479">Metal-binding</keyword>
<keyword id="KW-0547">Nucleotide-binding</keyword>
<keyword id="KW-0648">Protein biosynthesis</keyword>
<keyword id="KW-0862">Zinc</keyword>
<protein>
    <recommendedName>
        <fullName evidence="1">Glutamate--tRNA ligase</fullName>
        <ecNumber evidence="1">6.1.1.17</ecNumber>
    </recommendedName>
    <alternativeName>
        <fullName evidence="1">Glutamyl-tRNA synthetase</fullName>
        <shortName evidence="1">GluRS</shortName>
    </alternativeName>
</protein>
<reference key="1">
    <citation type="journal article" date="2005" name="Nucleic Acids Res.">
        <title>Genome dynamics and diversity of Shigella species, the etiologic agents of bacillary dysentery.</title>
        <authorList>
            <person name="Yang F."/>
            <person name="Yang J."/>
            <person name="Zhang X."/>
            <person name="Chen L."/>
            <person name="Jiang Y."/>
            <person name="Yan Y."/>
            <person name="Tang X."/>
            <person name="Wang J."/>
            <person name="Xiong Z."/>
            <person name="Dong J."/>
            <person name="Xue Y."/>
            <person name="Zhu Y."/>
            <person name="Xu X."/>
            <person name="Sun L."/>
            <person name="Chen S."/>
            <person name="Nie H."/>
            <person name="Peng J."/>
            <person name="Xu J."/>
            <person name="Wang Y."/>
            <person name="Yuan Z."/>
            <person name="Wen Y."/>
            <person name="Yao Z."/>
            <person name="Shen Y."/>
            <person name="Qiang B."/>
            <person name="Hou Y."/>
            <person name="Yu J."/>
            <person name="Jin Q."/>
        </authorList>
    </citation>
    <scope>NUCLEOTIDE SEQUENCE [LARGE SCALE GENOMIC DNA]</scope>
    <source>
        <strain>Sb227</strain>
    </source>
</reference>
<sequence>MKIKTRFAPSPTGYLHVGGARTALYSWLFARNHGGEFVLRIEDTDLERSTPEAIEAIMDGMNWLSLEWDEGPYYQTKRFDRYNAVIDQMLEEGTAYKCYCSKERLEALREEQMAKGEKPRYDGRCRHSHEHHADDEPCVVRFANPQEGSVVFDDQIRGPIEFSNQELDDLIIRRTDGSPTYNFCVVVDDWDMEITHVIRGEDHINNTPRQINILKALKAPVPVYAHVSMINGDDGKKLSKRHGAVSVMQYRDDGYLPEALLNYLVRLGWSHGDQEIFTREEMIKYFTLNAVSKSASAFNTDKLLWLNHHYINALPPEYVATHLQWHIEQENIDTRNGPQLADLVKLLGERCKTLKEMAQSCRYFYEDFAEFDADARKKHLRPVARQPLEVVRDKLAAITDWPAENVHHAIQATADELEVGMGKVGMPLRVAVTGAGQSPALDVTVHAIGRTRSIERINKALAFIAERENQQ</sequence>
<accession>Q31Y73</accession>
<organism>
    <name type="scientific">Shigella boydii serotype 4 (strain Sb227)</name>
    <dbReference type="NCBI Taxonomy" id="300268"/>
    <lineage>
        <taxon>Bacteria</taxon>
        <taxon>Pseudomonadati</taxon>
        <taxon>Pseudomonadota</taxon>
        <taxon>Gammaproteobacteria</taxon>
        <taxon>Enterobacterales</taxon>
        <taxon>Enterobacteriaceae</taxon>
        <taxon>Shigella</taxon>
    </lineage>
</organism>
<comment type="function">
    <text evidence="1">Catalyzes the attachment of glutamate to tRNA(Glu) in a two-step reaction: glutamate is first activated by ATP to form Glu-AMP and then transferred to the acceptor end of tRNA(Glu).</text>
</comment>
<comment type="catalytic activity">
    <reaction evidence="1">
        <text>tRNA(Glu) + L-glutamate + ATP = L-glutamyl-tRNA(Glu) + AMP + diphosphate</text>
        <dbReference type="Rhea" id="RHEA:23540"/>
        <dbReference type="Rhea" id="RHEA-COMP:9663"/>
        <dbReference type="Rhea" id="RHEA-COMP:9680"/>
        <dbReference type="ChEBI" id="CHEBI:29985"/>
        <dbReference type="ChEBI" id="CHEBI:30616"/>
        <dbReference type="ChEBI" id="CHEBI:33019"/>
        <dbReference type="ChEBI" id="CHEBI:78442"/>
        <dbReference type="ChEBI" id="CHEBI:78520"/>
        <dbReference type="ChEBI" id="CHEBI:456215"/>
        <dbReference type="EC" id="6.1.1.17"/>
    </reaction>
</comment>
<comment type="cofactor">
    <cofactor evidence="1">
        <name>Zn(2+)</name>
        <dbReference type="ChEBI" id="CHEBI:29105"/>
    </cofactor>
    <text evidence="1">Binds 1 zinc ion per subunit.</text>
</comment>
<comment type="subunit">
    <text evidence="1">Monomer.</text>
</comment>
<comment type="subcellular location">
    <subcellularLocation>
        <location evidence="1">Cytoplasm</location>
    </subcellularLocation>
</comment>
<comment type="similarity">
    <text evidence="1">Belongs to the class-I aminoacyl-tRNA synthetase family. Glutamate--tRNA ligase type 1 subfamily.</text>
</comment>
<name>SYE_SHIBS</name>
<feature type="chain" id="PRO_0000237399" description="Glutamate--tRNA ligase">
    <location>
        <begin position="1"/>
        <end position="471"/>
    </location>
</feature>
<feature type="short sequence motif" description="'HIGH' region" evidence="1">
    <location>
        <begin position="9"/>
        <end position="19"/>
    </location>
</feature>
<feature type="short sequence motif" description="'KMSKS' region" evidence="1">
    <location>
        <begin position="237"/>
        <end position="241"/>
    </location>
</feature>
<feature type="binding site" evidence="1">
    <location>
        <position position="98"/>
    </location>
    <ligand>
        <name>Zn(2+)</name>
        <dbReference type="ChEBI" id="CHEBI:29105"/>
    </ligand>
</feature>
<feature type="binding site" evidence="1">
    <location>
        <position position="100"/>
    </location>
    <ligand>
        <name>Zn(2+)</name>
        <dbReference type="ChEBI" id="CHEBI:29105"/>
    </ligand>
</feature>
<feature type="binding site" evidence="1">
    <location>
        <position position="125"/>
    </location>
    <ligand>
        <name>Zn(2+)</name>
        <dbReference type="ChEBI" id="CHEBI:29105"/>
    </ligand>
</feature>
<feature type="binding site" evidence="1">
    <location>
        <position position="127"/>
    </location>
    <ligand>
        <name>Zn(2+)</name>
        <dbReference type="ChEBI" id="CHEBI:29105"/>
    </ligand>
</feature>
<feature type="binding site" evidence="1">
    <location>
        <position position="240"/>
    </location>
    <ligand>
        <name>ATP</name>
        <dbReference type="ChEBI" id="CHEBI:30616"/>
    </ligand>
</feature>
<gene>
    <name evidence="1" type="primary">gltX</name>
    <name type="ordered locus">SBO_2426</name>
</gene>
<proteinExistence type="inferred from homology"/>
<evidence type="ECO:0000255" key="1">
    <source>
        <dbReference type="HAMAP-Rule" id="MF_00022"/>
    </source>
</evidence>